<gene>
    <name type="primary">MAP70.5</name>
    <name type="ordered locus">At4g17220</name>
    <name type="ORF">dl4645c</name>
    <name type="ORF">FCAALL.385</name>
</gene>
<evidence type="ECO:0000250" key="1"/>
<evidence type="ECO:0000255" key="2"/>
<evidence type="ECO:0000256" key="3">
    <source>
        <dbReference type="SAM" id="MobiDB-lite"/>
    </source>
</evidence>
<evidence type="ECO:0000269" key="4">
    <source>
    </source>
</evidence>
<evidence type="ECO:0000269" key="5">
    <source>
    </source>
</evidence>
<evidence type="ECO:0000305" key="6"/>
<proteinExistence type="evidence at protein level"/>
<keyword id="KW-0961">Cell wall biogenesis/degradation</keyword>
<keyword id="KW-0175">Coiled coil</keyword>
<keyword id="KW-0963">Cytoplasm</keyword>
<keyword id="KW-0206">Cytoskeleton</keyword>
<keyword id="KW-0493">Microtubule</keyword>
<keyword id="KW-1185">Reference proteome</keyword>
<sequence>MTAAENPFVSDTSSLQSQLKEKEKELLAAKAEVEALRTNEELKDRVFKELRENVRKLEEKLGATENQVDQKELERKKLEEEKEDALAAQDAAEEALRRVYTHQQDDDSLPLESIIAPLESQIKIHKHEISALQEDKKALERLTKSKESALLEAERILRSALERALIVEEVQNHNFELRRQIEICQDENKFLEKINRQKVLEIEKLSQSIVELEEAILAGGTAANAVRDYRRQISQLNDEKRTLERELARVKVSASRVALAVANEWKDENDRVMPVKQWLEERRILHGEMQKLKDKLAVSERTAKAESQLKERLKLRLKTIEDGLKGPNTFFVSPTTKTEKSGKILGFLTSGGGSKKRSSSQLRGSVTGRIHAMNQPIDRVGESDEMENSKITANGLTDQHEEDSERKTEEDGNVYSEDMVSGFLYDRLQKEVIALRKLCESKEGTINAKNEEIKMLLKKVDALTKAIEVETKKAKREAAAREKENALAMLNEESKLCRKAKLPRSRIPNPRCQ</sequence>
<feature type="chain" id="PRO_0000409461" description="Microtubule-associated protein 70-5">
    <location>
        <begin position="1"/>
        <end position="513"/>
    </location>
</feature>
<feature type="region of interest" description="Disordered" evidence="3">
    <location>
        <begin position="1"/>
        <end position="20"/>
    </location>
</feature>
<feature type="region of interest" description="Disordered" evidence="3">
    <location>
        <begin position="60"/>
        <end position="81"/>
    </location>
</feature>
<feature type="region of interest" description="Required for targeting to microtubules" evidence="1">
    <location>
        <begin position="190"/>
        <end position="400"/>
    </location>
</feature>
<feature type="region of interest" description="Disordered" evidence="3">
    <location>
        <begin position="347"/>
        <end position="367"/>
    </location>
</feature>
<feature type="region of interest" description="Disordered" evidence="3">
    <location>
        <begin position="393"/>
        <end position="413"/>
    </location>
</feature>
<feature type="coiled-coil region" evidence="2">
    <location>
        <begin position="10"/>
        <end position="322"/>
    </location>
</feature>
<feature type="coiled-coil region" evidence="2">
    <location>
        <begin position="426"/>
        <end position="501"/>
    </location>
</feature>
<feature type="compositionally biased region" description="Polar residues" evidence="3">
    <location>
        <begin position="9"/>
        <end position="18"/>
    </location>
</feature>
<feature type="compositionally biased region" description="Basic and acidic residues" evidence="3">
    <location>
        <begin position="60"/>
        <end position="80"/>
    </location>
</feature>
<accession>Q8GYX3</accession>
<accession>O23565</accession>
<accession>Q9M0M6</accession>
<protein>
    <recommendedName>
        <fullName>Microtubule-associated protein 70-5</fullName>
        <shortName>AtMAP70-5</shortName>
    </recommendedName>
    <alternativeName>
        <fullName>70 kDa microtubule-associated protein 5</fullName>
    </alternativeName>
</protein>
<organism>
    <name type="scientific">Arabidopsis thaliana</name>
    <name type="common">Mouse-ear cress</name>
    <dbReference type="NCBI Taxonomy" id="3702"/>
    <lineage>
        <taxon>Eukaryota</taxon>
        <taxon>Viridiplantae</taxon>
        <taxon>Streptophyta</taxon>
        <taxon>Embryophyta</taxon>
        <taxon>Tracheophyta</taxon>
        <taxon>Spermatophyta</taxon>
        <taxon>Magnoliopsida</taxon>
        <taxon>eudicotyledons</taxon>
        <taxon>Gunneridae</taxon>
        <taxon>Pentapetalae</taxon>
        <taxon>rosids</taxon>
        <taxon>malvids</taxon>
        <taxon>Brassicales</taxon>
        <taxon>Brassicaceae</taxon>
        <taxon>Camelineae</taxon>
        <taxon>Arabidopsis</taxon>
    </lineage>
</organism>
<dbReference type="EMBL" id="AM086442">
    <property type="protein sequence ID" value="CAJ31082.1"/>
    <property type="molecule type" value="mRNA"/>
</dbReference>
<dbReference type="EMBL" id="Z97343">
    <property type="protein sequence ID" value="CAB10503.1"/>
    <property type="status" value="ALT_SEQ"/>
    <property type="molecule type" value="Genomic_DNA"/>
</dbReference>
<dbReference type="EMBL" id="AL161546">
    <property type="protein sequence ID" value="CAB78725.1"/>
    <property type="status" value="ALT_SEQ"/>
    <property type="molecule type" value="Genomic_DNA"/>
</dbReference>
<dbReference type="EMBL" id="CP002687">
    <property type="protein sequence ID" value="AEE83864.1"/>
    <property type="molecule type" value="Genomic_DNA"/>
</dbReference>
<dbReference type="EMBL" id="BT005901">
    <property type="protein sequence ID" value="AAO64836.1"/>
    <property type="molecule type" value="mRNA"/>
</dbReference>
<dbReference type="EMBL" id="AK117336">
    <property type="protein sequence ID" value="BAC42006.1"/>
    <property type="molecule type" value="mRNA"/>
</dbReference>
<dbReference type="PIR" id="B71441">
    <property type="entry name" value="B71441"/>
</dbReference>
<dbReference type="RefSeq" id="NP_193455.2">
    <property type="nucleotide sequence ID" value="NM_117827.3"/>
</dbReference>
<dbReference type="SMR" id="Q8GYX3"/>
<dbReference type="BioGRID" id="12727">
    <property type="interactions" value="27"/>
</dbReference>
<dbReference type="FunCoup" id="Q8GYX3">
    <property type="interactions" value="89"/>
</dbReference>
<dbReference type="IntAct" id="Q8GYX3">
    <property type="interactions" value="28"/>
</dbReference>
<dbReference type="STRING" id="3702.Q8GYX3"/>
<dbReference type="PaxDb" id="3702-AT4G17220.1"/>
<dbReference type="ProteomicsDB" id="238267"/>
<dbReference type="EnsemblPlants" id="AT4G17220.1">
    <property type="protein sequence ID" value="AT4G17220.1"/>
    <property type="gene ID" value="AT4G17220"/>
</dbReference>
<dbReference type="GeneID" id="827434"/>
<dbReference type="Gramene" id="AT4G17220.1">
    <property type="protein sequence ID" value="AT4G17220.1"/>
    <property type="gene ID" value="AT4G17220"/>
</dbReference>
<dbReference type="KEGG" id="ath:AT4G17220"/>
<dbReference type="Araport" id="AT4G17220"/>
<dbReference type="TAIR" id="AT4G17220">
    <property type="gene designation" value="MAP70-5"/>
</dbReference>
<dbReference type="eggNOG" id="ENOG502QS8R">
    <property type="taxonomic scope" value="Eukaryota"/>
</dbReference>
<dbReference type="HOGENOM" id="CLU_023069_0_0_1"/>
<dbReference type="InParanoid" id="Q8GYX3"/>
<dbReference type="OMA" id="MLPFDGH"/>
<dbReference type="PhylomeDB" id="Q8GYX3"/>
<dbReference type="PRO" id="PR:Q8GYX3"/>
<dbReference type="Proteomes" id="UP000006548">
    <property type="component" value="Chromosome 4"/>
</dbReference>
<dbReference type="ExpressionAtlas" id="Q8GYX3">
    <property type="expression patterns" value="baseline and differential"/>
</dbReference>
<dbReference type="GO" id="GO:0005737">
    <property type="term" value="C:cytoplasm"/>
    <property type="evidence" value="ECO:0007669"/>
    <property type="project" value="UniProtKB-KW"/>
</dbReference>
<dbReference type="GO" id="GO:0005874">
    <property type="term" value="C:microtubule"/>
    <property type="evidence" value="ECO:0000250"/>
    <property type="project" value="TAIR"/>
</dbReference>
<dbReference type="GO" id="GO:0008017">
    <property type="term" value="F:microtubule binding"/>
    <property type="evidence" value="ECO:0000250"/>
    <property type="project" value="TAIR"/>
</dbReference>
<dbReference type="GO" id="GO:0071555">
    <property type="term" value="P:cell wall organization"/>
    <property type="evidence" value="ECO:0007669"/>
    <property type="project" value="UniProtKB-KW"/>
</dbReference>
<dbReference type="GO" id="GO:0007010">
    <property type="term" value="P:cytoskeleton organization"/>
    <property type="evidence" value="ECO:0000304"/>
    <property type="project" value="TAIR"/>
</dbReference>
<dbReference type="GO" id="GO:0009832">
    <property type="term" value="P:plant-type cell wall biogenesis"/>
    <property type="evidence" value="ECO:0000315"/>
    <property type="project" value="TAIR"/>
</dbReference>
<dbReference type="GO" id="GO:0010051">
    <property type="term" value="P:xylem and phloem pattern formation"/>
    <property type="evidence" value="ECO:0000315"/>
    <property type="project" value="TAIR"/>
</dbReference>
<dbReference type="InterPro" id="IPR009768">
    <property type="entry name" value="MAP70"/>
</dbReference>
<dbReference type="PANTHER" id="PTHR31246">
    <property type="entry name" value="MICROTUBULE-ASSOCIATED PROTEIN 70-2"/>
    <property type="match status" value="1"/>
</dbReference>
<dbReference type="PANTHER" id="PTHR31246:SF5">
    <property type="entry name" value="MICROTUBULE-ASSOCIATED PROTEIN 70-5"/>
    <property type="match status" value="1"/>
</dbReference>
<dbReference type="Pfam" id="PF07058">
    <property type="entry name" value="MAP70"/>
    <property type="match status" value="2"/>
</dbReference>
<name>MP705_ARATH</name>
<comment type="function">
    <text evidence="4 5">Plant-specific protein that interact with microtubules and regulates microtubule dynamics. May play a role in anisotropic cell expansion and organ growth. In association with MAP70.1, is essential for the normal banding pattern of secondary cell wall and for the proper development of xylem tracheary elements and wood formation.</text>
</comment>
<comment type="subunit">
    <text evidence="5">Interacts with MAP70.1 and itself.</text>
</comment>
<comment type="subcellular location">
    <subcellularLocation>
        <location evidence="4 5">Cytoplasm</location>
        <location evidence="4 5">Cytoskeleton</location>
    </subcellularLocation>
    <text>Associated to microtubules in tracheary elements.</text>
</comment>
<comment type="induction">
    <text evidence="5">Induced upon xylem tracheary elements differentiation.</text>
</comment>
<comment type="miscellaneous">
    <text>Plant silencing MAP70.5 show reduced inflorescence stem length and diameter, and inhibition of cell expansion. Over-expression of MAP70.5 causes epidermal cells to swell, stunted growth and induces right-handed organ twisting.</text>
</comment>
<comment type="similarity">
    <text evidence="6">Belongs to the MAP70 family.</text>
</comment>
<comment type="sequence caution" evidence="6">
    <conflict type="erroneous gene model prediction">
        <sequence resource="EMBL-CDS" id="CAB10503"/>
    </conflict>
</comment>
<comment type="sequence caution" evidence="6">
    <conflict type="erroneous gene model prediction">
        <sequence resource="EMBL-CDS" id="CAB78725"/>
    </conflict>
</comment>
<reference key="1">
    <citation type="journal article" date="2005" name="Plant J.">
        <title>Identification of a novel family of 70 kDa microtubule-associated proteins in Arabidopsis cells.</title>
        <authorList>
            <person name="Korolev A.V."/>
            <person name="Chan J."/>
            <person name="Naldrett M.J."/>
            <person name="Doonan J.H."/>
            <person name="Lloyd C.W."/>
        </authorList>
    </citation>
    <scope>NUCLEOTIDE SEQUENCE [MRNA]</scope>
</reference>
<reference key="2">
    <citation type="journal article" date="1998" name="Nature">
        <title>Analysis of 1.9 Mb of contiguous sequence from chromosome 4 of Arabidopsis thaliana.</title>
        <authorList>
            <person name="Bevan M."/>
            <person name="Bancroft I."/>
            <person name="Bent E."/>
            <person name="Love K."/>
            <person name="Goodman H.M."/>
            <person name="Dean C."/>
            <person name="Bergkamp R."/>
            <person name="Dirkse W."/>
            <person name="van Staveren M."/>
            <person name="Stiekema W."/>
            <person name="Drost L."/>
            <person name="Ridley P."/>
            <person name="Hudson S.-A."/>
            <person name="Patel K."/>
            <person name="Murphy G."/>
            <person name="Piffanelli P."/>
            <person name="Wedler H."/>
            <person name="Wedler E."/>
            <person name="Wambutt R."/>
            <person name="Weitzenegger T."/>
            <person name="Pohl T."/>
            <person name="Terryn N."/>
            <person name="Gielen J."/>
            <person name="Villarroel R."/>
            <person name="De Clercq R."/>
            <person name="van Montagu M."/>
            <person name="Lecharny A."/>
            <person name="Aubourg S."/>
            <person name="Gy I."/>
            <person name="Kreis M."/>
            <person name="Lao N."/>
            <person name="Kavanagh T."/>
            <person name="Hempel S."/>
            <person name="Kotter P."/>
            <person name="Entian K.-D."/>
            <person name="Rieger M."/>
            <person name="Schaefer M."/>
            <person name="Funk B."/>
            <person name="Mueller-Auer S."/>
            <person name="Silvey M."/>
            <person name="James R."/>
            <person name="Monfort A."/>
            <person name="Pons A."/>
            <person name="Puigdomenech P."/>
            <person name="Douka A."/>
            <person name="Voukelatou E."/>
            <person name="Milioni D."/>
            <person name="Hatzopoulos P."/>
            <person name="Piravandi E."/>
            <person name="Obermaier B."/>
            <person name="Hilbert H."/>
            <person name="Duesterhoeft A."/>
            <person name="Moores T."/>
            <person name="Jones J.D.G."/>
            <person name="Eneva T."/>
            <person name="Palme K."/>
            <person name="Benes V."/>
            <person name="Rechmann S."/>
            <person name="Ansorge W."/>
            <person name="Cooke R."/>
            <person name="Berger C."/>
            <person name="Delseny M."/>
            <person name="Voet M."/>
            <person name="Volckaert G."/>
            <person name="Mewes H.-W."/>
            <person name="Klosterman S."/>
            <person name="Schueller C."/>
            <person name="Chalwatzis N."/>
        </authorList>
    </citation>
    <scope>NUCLEOTIDE SEQUENCE [LARGE SCALE GENOMIC DNA]</scope>
    <source>
        <strain>cv. Columbia</strain>
    </source>
</reference>
<reference key="3">
    <citation type="journal article" date="1999" name="Nature">
        <title>Sequence and analysis of chromosome 4 of the plant Arabidopsis thaliana.</title>
        <authorList>
            <person name="Mayer K.F.X."/>
            <person name="Schueller C."/>
            <person name="Wambutt R."/>
            <person name="Murphy G."/>
            <person name="Volckaert G."/>
            <person name="Pohl T."/>
            <person name="Duesterhoeft A."/>
            <person name="Stiekema W."/>
            <person name="Entian K.-D."/>
            <person name="Terryn N."/>
            <person name="Harris B."/>
            <person name="Ansorge W."/>
            <person name="Brandt P."/>
            <person name="Grivell L.A."/>
            <person name="Rieger M."/>
            <person name="Weichselgartner M."/>
            <person name="de Simone V."/>
            <person name="Obermaier B."/>
            <person name="Mache R."/>
            <person name="Mueller M."/>
            <person name="Kreis M."/>
            <person name="Delseny M."/>
            <person name="Puigdomenech P."/>
            <person name="Watson M."/>
            <person name="Schmidtheini T."/>
            <person name="Reichert B."/>
            <person name="Portetelle D."/>
            <person name="Perez-Alonso M."/>
            <person name="Boutry M."/>
            <person name="Bancroft I."/>
            <person name="Vos P."/>
            <person name="Hoheisel J."/>
            <person name="Zimmermann W."/>
            <person name="Wedler H."/>
            <person name="Ridley P."/>
            <person name="Langham S.-A."/>
            <person name="McCullagh B."/>
            <person name="Bilham L."/>
            <person name="Robben J."/>
            <person name="van der Schueren J."/>
            <person name="Grymonprez B."/>
            <person name="Chuang Y.-J."/>
            <person name="Vandenbussche F."/>
            <person name="Braeken M."/>
            <person name="Weltjens I."/>
            <person name="Voet M."/>
            <person name="Bastiaens I."/>
            <person name="Aert R."/>
            <person name="Defoor E."/>
            <person name="Weitzenegger T."/>
            <person name="Bothe G."/>
            <person name="Ramsperger U."/>
            <person name="Hilbert H."/>
            <person name="Braun M."/>
            <person name="Holzer E."/>
            <person name="Brandt A."/>
            <person name="Peters S."/>
            <person name="van Staveren M."/>
            <person name="Dirkse W."/>
            <person name="Mooijman P."/>
            <person name="Klein Lankhorst R."/>
            <person name="Rose M."/>
            <person name="Hauf J."/>
            <person name="Koetter P."/>
            <person name="Berneiser S."/>
            <person name="Hempel S."/>
            <person name="Feldpausch M."/>
            <person name="Lamberth S."/>
            <person name="Van den Daele H."/>
            <person name="De Keyser A."/>
            <person name="Buysshaert C."/>
            <person name="Gielen J."/>
            <person name="Villarroel R."/>
            <person name="De Clercq R."/>
            <person name="van Montagu M."/>
            <person name="Rogers J."/>
            <person name="Cronin A."/>
            <person name="Quail M.A."/>
            <person name="Bray-Allen S."/>
            <person name="Clark L."/>
            <person name="Doggett J."/>
            <person name="Hall S."/>
            <person name="Kay M."/>
            <person name="Lennard N."/>
            <person name="McLay K."/>
            <person name="Mayes R."/>
            <person name="Pettett A."/>
            <person name="Rajandream M.A."/>
            <person name="Lyne M."/>
            <person name="Benes V."/>
            <person name="Rechmann S."/>
            <person name="Borkova D."/>
            <person name="Bloecker H."/>
            <person name="Scharfe M."/>
            <person name="Grimm M."/>
            <person name="Loehnert T.-H."/>
            <person name="Dose S."/>
            <person name="de Haan M."/>
            <person name="Maarse A.C."/>
            <person name="Schaefer M."/>
            <person name="Mueller-Auer S."/>
            <person name="Gabel C."/>
            <person name="Fuchs M."/>
            <person name="Fartmann B."/>
            <person name="Granderath K."/>
            <person name="Dauner D."/>
            <person name="Herzl A."/>
            <person name="Neumann S."/>
            <person name="Argiriou A."/>
            <person name="Vitale D."/>
            <person name="Liguori R."/>
            <person name="Piravandi E."/>
            <person name="Massenet O."/>
            <person name="Quigley F."/>
            <person name="Clabauld G."/>
            <person name="Muendlein A."/>
            <person name="Felber R."/>
            <person name="Schnabl S."/>
            <person name="Hiller R."/>
            <person name="Schmidt W."/>
            <person name="Lecharny A."/>
            <person name="Aubourg S."/>
            <person name="Chefdor F."/>
            <person name="Cooke R."/>
            <person name="Berger C."/>
            <person name="Monfort A."/>
            <person name="Casacuberta E."/>
            <person name="Gibbons T."/>
            <person name="Weber N."/>
            <person name="Vandenbol M."/>
            <person name="Bargues M."/>
            <person name="Terol J."/>
            <person name="Torres A."/>
            <person name="Perez-Perez A."/>
            <person name="Purnelle B."/>
            <person name="Bent E."/>
            <person name="Johnson S."/>
            <person name="Tacon D."/>
            <person name="Jesse T."/>
            <person name="Heijnen L."/>
            <person name="Schwarz S."/>
            <person name="Scholler P."/>
            <person name="Heber S."/>
            <person name="Francs P."/>
            <person name="Bielke C."/>
            <person name="Frishman D."/>
            <person name="Haase D."/>
            <person name="Lemcke K."/>
            <person name="Mewes H.-W."/>
            <person name="Stocker S."/>
            <person name="Zaccaria P."/>
            <person name="Bevan M."/>
            <person name="Wilson R.K."/>
            <person name="de la Bastide M."/>
            <person name="Habermann K."/>
            <person name="Parnell L."/>
            <person name="Dedhia N."/>
            <person name="Gnoj L."/>
            <person name="Schutz K."/>
            <person name="Huang E."/>
            <person name="Spiegel L."/>
            <person name="Sekhon M."/>
            <person name="Murray J."/>
            <person name="Sheet P."/>
            <person name="Cordes M."/>
            <person name="Abu-Threideh J."/>
            <person name="Stoneking T."/>
            <person name="Kalicki J."/>
            <person name="Graves T."/>
            <person name="Harmon G."/>
            <person name="Edwards J."/>
            <person name="Latreille P."/>
            <person name="Courtney L."/>
            <person name="Cloud J."/>
            <person name="Abbott A."/>
            <person name="Scott K."/>
            <person name="Johnson D."/>
            <person name="Minx P."/>
            <person name="Bentley D."/>
            <person name="Fulton B."/>
            <person name="Miller N."/>
            <person name="Greco T."/>
            <person name="Kemp K."/>
            <person name="Kramer J."/>
            <person name="Fulton L."/>
            <person name="Mardis E."/>
            <person name="Dante M."/>
            <person name="Pepin K."/>
            <person name="Hillier L.W."/>
            <person name="Nelson J."/>
            <person name="Spieth J."/>
            <person name="Ryan E."/>
            <person name="Andrews S."/>
            <person name="Geisel C."/>
            <person name="Layman D."/>
            <person name="Du H."/>
            <person name="Ali J."/>
            <person name="Berghoff A."/>
            <person name="Jones K."/>
            <person name="Drone K."/>
            <person name="Cotton M."/>
            <person name="Joshu C."/>
            <person name="Antonoiu B."/>
            <person name="Zidanic M."/>
            <person name="Strong C."/>
            <person name="Sun H."/>
            <person name="Lamar B."/>
            <person name="Yordan C."/>
            <person name="Ma P."/>
            <person name="Zhong J."/>
            <person name="Preston R."/>
            <person name="Vil D."/>
            <person name="Shekher M."/>
            <person name="Matero A."/>
            <person name="Shah R."/>
            <person name="Swaby I.K."/>
            <person name="O'Shaughnessy A."/>
            <person name="Rodriguez M."/>
            <person name="Hoffman J."/>
            <person name="Till S."/>
            <person name="Granat S."/>
            <person name="Shohdy N."/>
            <person name="Hasegawa A."/>
            <person name="Hameed A."/>
            <person name="Lodhi M."/>
            <person name="Johnson A."/>
            <person name="Chen E."/>
            <person name="Marra M.A."/>
            <person name="Martienssen R."/>
            <person name="McCombie W.R."/>
        </authorList>
    </citation>
    <scope>NUCLEOTIDE SEQUENCE [LARGE SCALE GENOMIC DNA]</scope>
    <source>
        <strain>cv. Columbia</strain>
    </source>
</reference>
<reference key="4">
    <citation type="journal article" date="2017" name="Plant J.">
        <title>Araport11: a complete reannotation of the Arabidopsis thaliana reference genome.</title>
        <authorList>
            <person name="Cheng C.Y."/>
            <person name="Krishnakumar V."/>
            <person name="Chan A.P."/>
            <person name="Thibaud-Nissen F."/>
            <person name="Schobel S."/>
            <person name="Town C.D."/>
        </authorList>
    </citation>
    <scope>GENOME REANNOTATION</scope>
    <source>
        <strain>cv. Columbia</strain>
    </source>
</reference>
<reference key="5">
    <citation type="journal article" date="2002" name="Science">
        <title>Functional annotation of a full-length Arabidopsis cDNA collection.</title>
        <authorList>
            <person name="Seki M."/>
            <person name="Narusaka M."/>
            <person name="Kamiya A."/>
            <person name="Ishida J."/>
            <person name="Satou M."/>
            <person name="Sakurai T."/>
            <person name="Nakajima M."/>
            <person name="Enju A."/>
            <person name="Akiyama K."/>
            <person name="Oono Y."/>
            <person name="Muramatsu M."/>
            <person name="Hayashizaki Y."/>
            <person name="Kawai J."/>
            <person name="Carninci P."/>
            <person name="Itoh M."/>
            <person name="Ishii Y."/>
            <person name="Arakawa T."/>
            <person name="Shibata K."/>
            <person name="Shinagawa A."/>
            <person name="Shinozaki K."/>
        </authorList>
    </citation>
    <scope>NUCLEOTIDE SEQUENCE [LARGE SCALE MRNA]</scope>
    <source>
        <strain>cv. Columbia</strain>
    </source>
</reference>
<reference key="6">
    <citation type="journal article" date="2003" name="Science">
        <title>Empirical analysis of transcriptional activity in the Arabidopsis genome.</title>
        <authorList>
            <person name="Yamada K."/>
            <person name="Lim J."/>
            <person name="Dale J.M."/>
            <person name="Chen H."/>
            <person name="Shinn P."/>
            <person name="Palm C.J."/>
            <person name="Southwick A.M."/>
            <person name="Wu H.C."/>
            <person name="Kim C.J."/>
            <person name="Nguyen M."/>
            <person name="Pham P.K."/>
            <person name="Cheuk R.F."/>
            <person name="Karlin-Newmann G."/>
            <person name="Liu S.X."/>
            <person name="Lam B."/>
            <person name="Sakano H."/>
            <person name="Wu T."/>
            <person name="Yu G."/>
            <person name="Miranda M."/>
            <person name="Quach H.L."/>
            <person name="Tripp M."/>
            <person name="Chang C.H."/>
            <person name="Lee J.M."/>
            <person name="Toriumi M.J."/>
            <person name="Chan M.M."/>
            <person name="Tang C.C."/>
            <person name="Onodera C.S."/>
            <person name="Deng J.M."/>
            <person name="Akiyama K."/>
            <person name="Ansari Y."/>
            <person name="Arakawa T."/>
            <person name="Banh J."/>
            <person name="Banno F."/>
            <person name="Bowser L."/>
            <person name="Brooks S.Y."/>
            <person name="Carninci P."/>
            <person name="Chao Q."/>
            <person name="Choy N."/>
            <person name="Enju A."/>
            <person name="Goldsmith A.D."/>
            <person name="Gurjal M."/>
            <person name="Hansen N.F."/>
            <person name="Hayashizaki Y."/>
            <person name="Johnson-Hopson C."/>
            <person name="Hsuan V.W."/>
            <person name="Iida K."/>
            <person name="Karnes M."/>
            <person name="Khan S."/>
            <person name="Koesema E."/>
            <person name="Ishida J."/>
            <person name="Jiang P.X."/>
            <person name="Jones T."/>
            <person name="Kawai J."/>
            <person name="Kamiya A."/>
            <person name="Meyers C."/>
            <person name="Nakajima M."/>
            <person name="Narusaka M."/>
            <person name="Seki M."/>
            <person name="Sakurai T."/>
            <person name="Satou M."/>
            <person name="Tamse R."/>
            <person name="Vaysberg M."/>
            <person name="Wallender E.K."/>
            <person name="Wong C."/>
            <person name="Yamamura Y."/>
            <person name="Yuan S."/>
            <person name="Shinozaki K."/>
            <person name="Davis R.W."/>
            <person name="Theologis A."/>
            <person name="Ecker J.R."/>
        </authorList>
    </citation>
    <scope>NUCLEOTIDE SEQUENCE [LARGE SCALE MRNA]</scope>
    <source>
        <strain>cv. Columbia</strain>
    </source>
</reference>
<reference key="7">
    <citation type="journal article" date="2007" name="J. Cell Sci.">
        <title>AtMAP70-5, a divergent member of the MAP70 family of microtubule-associated proteins, is required for anisotropic cell growth in Arabidopsis.</title>
        <authorList>
            <person name="Korolev A.V."/>
            <person name="Buschmann H."/>
            <person name="Doonan J.H."/>
            <person name="Lloyd C.W."/>
        </authorList>
    </citation>
    <scope>FUNCTION</scope>
    <scope>SUBCELLULAR LOCATION</scope>
</reference>
<reference key="8">
    <citation type="journal article" date="2010" name="Curr. Biol.">
        <title>The microtubule-associated protein AtMAP70-5 regulates secondary wall patterning in Arabidopsis wood cells.</title>
        <authorList>
            <person name="Pesquet E."/>
            <person name="Korolev A.V."/>
            <person name="Calder G."/>
            <person name="Lloyd C.W."/>
        </authorList>
    </citation>
    <scope>FUNCTION</scope>
    <scope>SUBCELLULAR LOCATION</scope>
    <scope>INDUCTION</scope>
    <scope>SUBUNIT</scope>
    <scope>INTERACTION WITH MAP70.1</scope>
</reference>